<reference key="1">
    <citation type="submission" date="2004-11" db="EMBL/GenBank/DDBJ databases">
        <authorList>
            <consortium name="The German cDNA consortium"/>
        </authorList>
    </citation>
    <scope>NUCLEOTIDE SEQUENCE [LARGE SCALE MRNA]</scope>
    <source>
        <tissue>Kidney</tissue>
    </source>
</reference>
<evidence type="ECO:0000250" key="1">
    <source>
        <dbReference type="UniProtKB" id="B9KDD4"/>
    </source>
</evidence>
<evidence type="ECO:0000250" key="2">
    <source>
        <dbReference type="UniProtKB" id="F1PJP5"/>
    </source>
</evidence>
<evidence type="ECO:0000250" key="3">
    <source>
        <dbReference type="UniProtKB" id="P39007"/>
    </source>
</evidence>
<evidence type="ECO:0000250" key="4">
    <source>
        <dbReference type="UniProtKB" id="P46977"/>
    </source>
</evidence>
<evidence type="ECO:0000250" key="5">
    <source>
        <dbReference type="UniProtKB" id="P46978"/>
    </source>
</evidence>
<evidence type="ECO:0000250" key="6">
    <source>
        <dbReference type="UniProtKB" id="Q5HTX9"/>
    </source>
</evidence>
<evidence type="ECO:0000255" key="7"/>
<evidence type="ECO:0000255" key="8">
    <source>
        <dbReference type="PROSITE-ProRule" id="PRU00498"/>
    </source>
</evidence>
<evidence type="ECO:0000305" key="9"/>
<proteinExistence type="evidence at transcript level"/>
<name>STT3A_PONAB</name>
<feature type="chain" id="PRO_0000326557" description="Dolichyl-diphosphooligosaccharide--protein glycosyltransferase subunit STT3A">
    <location>
        <begin position="1"/>
        <end position="705"/>
    </location>
</feature>
<feature type="topological domain" description="Cytoplasmic" evidence="9">
    <location>
        <begin position="1"/>
        <end position="17"/>
    </location>
</feature>
<feature type="transmembrane region" description="Helical" evidence="7">
    <location>
        <begin position="18"/>
        <end position="38"/>
    </location>
</feature>
<feature type="topological domain" description="Lumenal" evidence="9">
    <location>
        <begin position="39"/>
        <end position="119"/>
    </location>
</feature>
<feature type="transmembrane region" description="Helical" evidence="3">
    <location>
        <begin position="120"/>
        <end position="138"/>
    </location>
</feature>
<feature type="topological domain" description="Cytoplasmic" evidence="9">
    <location>
        <begin position="139"/>
        <end position="140"/>
    </location>
</feature>
<feature type="transmembrane region" description="Helical" evidence="3">
    <location>
        <begin position="141"/>
        <end position="158"/>
    </location>
</feature>
<feature type="topological domain" description="Lumenal" evidence="9">
    <location>
        <begin position="159"/>
        <end position="169"/>
    </location>
</feature>
<feature type="transmembrane region" description="Helical" evidence="3">
    <location>
        <begin position="170"/>
        <end position="189"/>
    </location>
</feature>
<feature type="topological domain" description="Cytoplasmic" evidence="9">
    <location>
        <begin position="190"/>
        <end position="191"/>
    </location>
</feature>
<feature type="transmembrane region" description="Helical" evidence="3">
    <location>
        <begin position="192"/>
        <end position="206"/>
    </location>
</feature>
<feature type="topological domain" description="Lumenal" evidence="9">
    <location>
        <begin position="207"/>
        <end position="211"/>
    </location>
</feature>
<feature type="transmembrane region" description="Helical" evidence="3">
    <location>
        <begin position="212"/>
        <end position="228"/>
    </location>
</feature>
<feature type="topological domain" description="Cytoplasmic" evidence="9">
    <location>
        <begin position="229"/>
        <end position="233"/>
    </location>
</feature>
<feature type="transmembrane region" description="Helical" evidence="3">
    <location>
        <begin position="234"/>
        <end position="259"/>
    </location>
</feature>
<feature type="topological domain" description="Lumenal" evidence="9">
    <location>
        <begin position="260"/>
        <end position="267"/>
    </location>
</feature>
<feature type="transmembrane region" description="Helical" evidence="3">
    <location>
        <begin position="268"/>
        <end position="287"/>
    </location>
</feature>
<feature type="topological domain" description="Cytoplasmic" evidence="9">
    <location>
        <begin position="288"/>
        <end position="300"/>
    </location>
</feature>
<feature type="transmembrane region" description="Helical" evidence="7">
    <location>
        <begin position="301"/>
        <end position="321"/>
    </location>
</feature>
<feature type="topological domain" description="Lumenal" evidence="9">
    <location>
        <begin position="322"/>
        <end position="356"/>
    </location>
</feature>
<feature type="transmembrane region" description="Helical" evidence="3">
    <location>
        <begin position="357"/>
        <end position="379"/>
    </location>
</feature>
<feature type="topological domain" description="Cytoplasmic" evidence="9">
    <location>
        <begin position="380"/>
        <end position="385"/>
    </location>
</feature>
<feature type="transmembrane region" description="Helical" evidence="3">
    <location>
        <begin position="386"/>
        <end position="402"/>
    </location>
</feature>
<feature type="topological domain" description="Lumenal" evidence="9">
    <location>
        <begin position="403"/>
        <end position="406"/>
    </location>
</feature>
<feature type="transmembrane region" description="Helical" evidence="3">
    <location>
        <begin position="407"/>
        <end position="428"/>
    </location>
</feature>
<feature type="topological domain" description="Cytoplasmic" evidence="9">
    <location>
        <begin position="429"/>
        <end position="453"/>
    </location>
</feature>
<feature type="transmembrane region" description="Helical" evidence="3">
    <location>
        <begin position="454"/>
        <end position="473"/>
    </location>
</feature>
<feature type="topological domain" description="Lumenal" evidence="9">
    <location>
        <begin position="474"/>
        <end position="705"/>
    </location>
</feature>
<feature type="region of interest" description="Interacts with target acceptor peptide in protein substrate" evidence="1">
    <location>
        <begin position="525"/>
        <end position="527"/>
    </location>
</feature>
<feature type="short sequence motif" description="DXD motif 1" evidence="6">
    <location>
        <begin position="47"/>
        <end position="49"/>
    </location>
</feature>
<feature type="short sequence motif" description="DXD motif 2" evidence="3">
    <location>
        <begin position="167"/>
        <end position="169"/>
    </location>
</feature>
<feature type="short sequence motif" description="SVSE motif" evidence="6">
    <location>
        <begin position="348"/>
        <end position="351"/>
    </location>
</feature>
<feature type="short sequence motif" description="WWDYG motif" evidence="3">
    <location>
        <begin position="525"/>
        <end position="529"/>
    </location>
</feature>
<feature type="short sequence motif" description="DK motif" evidence="3">
    <location>
        <begin position="592"/>
        <end position="599"/>
    </location>
</feature>
<feature type="binding site" evidence="1">
    <location>
        <position position="49"/>
    </location>
    <ligand>
        <name>Mn(2+)</name>
        <dbReference type="ChEBI" id="CHEBI:29035"/>
    </ligand>
</feature>
<feature type="binding site" evidence="1">
    <location>
        <position position="167"/>
    </location>
    <ligand>
        <name>Mn(2+)</name>
        <dbReference type="ChEBI" id="CHEBI:29035"/>
    </ligand>
</feature>
<feature type="binding site" evidence="1">
    <location>
        <position position="169"/>
    </location>
    <ligand>
        <name>Mn(2+)</name>
        <dbReference type="ChEBI" id="CHEBI:29035"/>
    </ligand>
</feature>
<feature type="binding site" evidence="1">
    <location>
        <position position="405"/>
    </location>
    <ligand>
        <name>dolichyl diphosphooligosaccharide</name>
        <dbReference type="ChEBI" id="CHEBI:57570"/>
    </ligand>
</feature>
<feature type="binding site" evidence="1">
    <location>
        <position position="530"/>
    </location>
    <ligand>
        <name>dolichyl diphosphooligosaccharide</name>
        <dbReference type="ChEBI" id="CHEBI:57570"/>
    </ligand>
</feature>
<feature type="site" description="Interacts with target acceptor peptide in protein substrate" evidence="1">
    <location>
        <position position="49"/>
    </location>
</feature>
<feature type="site" description="Important for catalytic activity" evidence="1">
    <location>
        <position position="160"/>
    </location>
</feature>
<feature type="site" description="Interacts with target acceptor peptide in protein substrate" evidence="1">
    <location>
        <position position="351"/>
    </location>
</feature>
<feature type="site" description="Interacts with target acceptor peptide in protein substrate" evidence="1">
    <location>
        <position position="595"/>
    </location>
</feature>
<feature type="glycosylation site" description="N-linked (GlcNAc...) asparagine" evidence="8">
    <location>
        <position position="537"/>
    </location>
</feature>
<feature type="glycosylation site" description="N-linked (GlcNAc...) asparagine" evidence="8">
    <location>
        <position position="544"/>
    </location>
</feature>
<feature type="glycosylation site" description="N-linked (GlcNAc...) (high mannose) asparagine" evidence="3">
    <location>
        <position position="548"/>
    </location>
</feature>
<organism>
    <name type="scientific">Pongo abelii</name>
    <name type="common">Sumatran orangutan</name>
    <name type="synonym">Pongo pygmaeus abelii</name>
    <dbReference type="NCBI Taxonomy" id="9601"/>
    <lineage>
        <taxon>Eukaryota</taxon>
        <taxon>Metazoa</taxon>
        <taxon>Chordata</taxon>
        <taxon>Craniata</taxon>
        <taxon>Vertebrata</taxon>
        <taxon>Euteleostomi</taxon>
        <taxon>Mammalia</taxon>
        <taxon>Eutheria</taxon>
        <taxon>Euarchontoglires</taxon>
        <taxon>Primates</taxon>
        <taxon>Haplorrhini</taxon>
        <taxon>Catarrhini</taxon>
        <taxon>Hominidae</taxon>
        <taxon>Pongo</taxon>
    </lineage>
</organism>
<accession>Q5RCE2</accession>
<keyword id="KW-0256">Endoplasmic reticulum</keyword>
<keyword id="KW-0325">Glycoprotein</keyword>
<keyword id="KW-0328">Glycosyltransferase</keyword>
<keyword id="KW-0460">Magnesium</keyword>
<keyword id="KW-0464">Manganese</keyword>
<keyword id="KW-0472">Membrane</keyword>
<keyword id="KW-0479">Metal-binding</keyword>
<keyword id="KW-1185">Reference proteome</keyword>
<keyword id="KW-0808">Transferase</keyword>
<keyword id="KW-0812">Transmembrane</keyword>
<keyword id="KW-1133">Transmembrane helix</keyword>
<gene>
    <name evidence="4" type="primary">STT3A</name>
</gene>
<dbReference type="EC" id="2.4.99.18"/>
<dbReference type="EMBL" id="CR858329">
    <property type="protein sequence ID" value="CAH90565.1"/>
    <property type="molecule type" value="mRNA"/>
</dbReference>
<dbReference type="RefSeq" id="NP_001127302.1">
    <property type="nucleotide sequence ID" value="NM_001133830.1"/>
</dbReference>
<dbReference type="RefSeq" id="XP_063584057.1">
    <property type="nucleotide sequence ID" value="XM_063727987.1"/>
</dbReference>
<dbReference type="RefSeq" id="XP_063584058.1">
    <property type="nucleotide sequence ID" value="XM_063727988.1"/>
</dbReference>
<dbReference type="SMR" id="Q5RCE2"/>
<dbReference type="FunCoup" id="Q5RCE2">
    <property type="interactions" value="1686"/>
</dbReference>
<dbReference type="STRING" id="9601.ENSPPYP00000004611"/>
<dbReference type="CAZy" id="GT66">
    <property type="family name" value="Glycosyltransferase Family 66"/>
</dbReference>
<dbReference type="GlyCosmos" id="Q5RCE2">
    <property type="glycosylation" value="3 sites, No reported glycans"/>
</dbReference>
<dbReference type="Ensembl" id="ENSPPYT00000004792.3">
    <property type="protein sequence ID" value="ENSPPYP00000004611.3"/>
    <property type="gene ID" value="ENSPPYG00000004034.3"/>
</dbReference>
<dbReference type="GeneID" id="100174363"/>
<dbReference type="KEGG" id="pon:100174363"/>
<dbReference type="CTD" id="3703"/>
<dbReference type="GeneTree" id="ENSGT00940000156655"/>
<dbReference type="InParanoid" id="Q5RCE2"/>
<dbReference type="OMA" id="TWYAIGT"/>
<dbReference type="OrthoDB" id="10261066at2759"/>
<dbReference type="UniPathway" id="UPA00378"/>
<dbReference type="Proteomes" id="UP000001595">
    <property type="component" value="Chromosome 11"/>
</dbReference>
<dbReference type="GO" id="GO:0008250">
    <property type="term" value="C:oligosaccharyltransferase complex"/>
    <property type="evidence" value="ECO:0000250"/>
    <property type="project" value="UniProtKB"/>
</dbReference>
<dbReference type="GO" id="GO:0160226">
    <property type="term" value="C:oligosaccharyltransferase complex A"/>
    <property type="evidence" value="ECO:0007669"/>
    <property type="project" value="Ensembl"/>
</dbReference>
<dbReference type="GO" id="GO:0004579">
    <property type="term" value="F:dolichyl-diphosphooligosaccharide-protein glycotransferase activity"/>
    <property type="evidence" value="ECO:0000250"/>
    <property type="project" value="UniProtKB"/>
</dbReference>
<dbReference type="GO" id="GO:0046872">
    <property type="term" value="F:metal ion binding"/>
    <property type="evidence" value="ECO:0007669"/>
    <property type="project" value="UniProtKB-KW"/>
</dbReference>
<dbReference type="GO" id="GO:0043686">
    <property type="term" value="P:co-translational protein modification"/>
    <property type="evidence" value="ECO:0000250"/>
    <property type="project" value="UniProtKB"/>
</dbReference>
<dbReference type="GO" id="GO:0043687">
    <property type="term" value="P:post-translational protein modification"/>
    <property type="evidence" value="ECO:0007669"/>
    <property type="project" value="TreeGrafter"/>
</dbReference>
<dbReference type="GO" id="GO:0018279">
    <property type="term" value="P:protein N-linked glycosylation via asparagine"/>
    <property type="evidence" value="ECO:0000250"/>
    <property type="project" value="UniProtKB"/>
</dbReference>
<dbReference type="FunFam" id="3.40.50.12610:FF:000002">
    <property type="entry name" value="dolichyl-diphosphooligosaccharide--protein glycosyltransferase subunit STT3A"/>
    <property type="match status" value="1"/>
</dbReference>
<dbReference type="Gene3D" id="3.40.50.12610">
    <property type="match status" value="1"/>
</dbReference>
<dbReference type="InterPro" id="IPR054479">
    <property type="entry name" value="AglB-like_core"/>
</dbReference>
<dbReference type="InterPro" id="IPR003674">
    <property type="entry name" value="Oligo_trans_STT3"/>
</dbReference>
<dbReference type="InterPro" id="IPR048307">
    <property type="entry name" value="STT3_N"/>
</dbReference>
<dbReference type="PANTHER" id="PTHR13872">
    <property type="entry name" value="DOLICHYL-DIPHOSPHOOLIGOSACCHARIDE--PROTEIN GLYCOSYLTRANSFERASE SUBUNIT"/>
    <property type="match status" value="1"/>
</dbReference>
<dbReference type="PANTHER" id="PTHR13872:SF43">
    <property type="entry name" value="DOLICHYL-DIPHOSPHOOLIGOSACCHARIDE--PROTEIN GLYCOSYLTRANSFERASE SUBUNIT STT3A"/>
    <property type="match status" value="1"/>
</dbReference>
<dbReference type="Pfam" id="PF22627">
    <property type="entry name" value="AglB_core-like"/>
    <property type="match status" value="1"/>
</dbReference>
<dbReference type="Pfam" id="PF02516">
    <property type="entry name" value="STT3"/>
    <property type="match status" value="1"/>
</dbReference>
<protein>
    <recommendedName>
        <fullName evidence="4">Dolichyl-diphosphooligosaccharide--protein glycosyltransferase subunit STT3A</fullName>
        <shortName>Oligosaccharyl transferase subunit STT3A</shortName>
        <shortName>STT3-A</shortName>
        <ecNumber>2.4.99.18</ecNumber>
    </recommendedName>
</protein>
<comment type="function">
    <text evidence="4">Catalytic subunit of the oligosaccharyl transferase (OST) complex that catalyzes the initial transfer of a defined glycan (Glc(3)Man(9)GlcNAc(2) in eukaryotes) from the lipid carrier dolichol-pyrophosphate to an asparagine residue within an Asn-X-Ser/Thr consensus motif in nascent polypeptide chains, the first step in protein N-glycosylation. N-glycosylation occurs cotranslationally and the complex associates with the Sec61 complex at the channel-forming translocon complex that mediates protein translocation across the endoplasmic reticulum (ER). All subunits are required for a maximal enzyme activity. This subunit contains the active site and the acceptor peptide and donor lipid-linked oligosaccharide (LLO) binding pockets. STT3A is present in the majority of OST complexes and mediates cotranslational N-glycosylation of most sites on target proteins, while STT3B-containing complexes are required for efficient post-translational glycosylation and mediate glycosylation of sites that have been skipped by STT3A. STT3A-containing OST-A complex is also required to prevent hyperglycosylation of some target proteins by preventing glycosylation of facultative sites before folding of target proteins is completed.</text>
</comment>
<comment type="catalytic activity">
    <reaction evidence="3">
        <text>a di-trans,poly-cis-dolichyl diphosphooligosaccharide + L-asparaginyl-[protein] = N(4)-(oligosaccharide-(1-&gt;4)-N-acetyl-beta-D-glucosaminyl-(1-&gt;4)-N-acetyl-beta-D-glucosaminyl)-L-asparaginyl-[protein] + a di-trans,poly-cis-dolichyl diphosphate + H(+)</text>
        <dbReference type="Rhea" id="RHEA:22980"/>
        <dbReference type="Rhea" id="RHEA-COMP:12804"/>
        <dbReference type="Rhea" id="RHEA-COMP:12805"/>
        <dbReference type="Rhea" id="RHEA-COMP:19506"/>
        <dbReference type="Rhea" id="RHEA-COMP:19509"/>
        <dbReference type="ChEBI" id="CHEBI:15378"/>
        <dbReference type="ChEBI" id="CHEBI:50347"/>
        <dbReference type="ChEBI" id="CHEBI:57497"/>
        <dbReference type="ChEBI" id="CHEBI:57570"/>
        <dbReference type="ChEBI" id="CHEBI:132529"/>
        <dbReference type="EC" id="2.4.99.18"/>
    </reaction>
</comment>
<comment type="cofactor">
    <cofactor evidence="4">
        <name>Mg(2+)</name>
        <dbReference type="ChEBI" id="CHEBI:18420"/>
    </cofactor>
    <cofactor evidence="1">
        <name>Mn(2+)</name>
        <dbReference type="ChEBI" id="CHEBI:29035"/>
    </cofactor>
</comment>
<comment type="pathway">
    <text evidence="4">Protein modification; protein glycosylation.</text>
</comment>
<comment type="subunit">
    <text evidence="2 4">Component of the oligosaccharyltransferase (OST) complex. There are 2 OST complexes, OST-A and OST-B, which contain STT3A or STT3B as catalytic subunit, respectively. OST-A and OST-B contain common core subunits RPN1, RPN2, OST48, OST4, DAD1 and TMEM258, and OST-A contains DC2/OSTC and KRTCAP2/KCP2 specific accessory subunits (By similarity). OST-A complex assembly occurs through the formation of 3 subcomplexes. Subcomplex 1 contains RPN1 and TMEM258, subcomplex 2 contains the OST-A-specific subunits STT3A, DC2/OSTC, and KCP2 as well as the core subunit OST4, and subcomplex 3 contains RPN2, DAD1, and OST48. The OST-A complex can form stable complexes with the Sec61 complex or with both the Sec61 and TRAP complexes (By similarity).</text>
</comment>
<comment type="subcellular location">
    <subcellularLocation>
        <location evidence="5">Endoplasmic reticulum membrane</location>
        <topology evidence="5">Multi-pass membrane protein</topology>
    </subcellularLocation>
</comment>
<comment type="domain">
    <text evidence="3">Despite low primary sequence conservation between eukaryotic catalytic subunits and bacterial and archaeal single subunit OSTs (ssOST), structural comparison revealed several common motifs at spatially equivalent positions, like the DXD motif 1 on the external loop 1 and the DXD motif 2 on the external loop 2 involved in binding of the metal ion cofactor and the carboxamide group of the acceptor asparagine, the conserved Glu residue of the TIXE/SVSE motif on the external loop 5 involved in catalysis, as well as the WWDYG and the DK/MI motifs in the globular domain that define the binding pocket for the +2 Ser/Thr of the acceptor sequon. In bacterial ssOSTs, an Arg residue was found to interact with a negatively charged side chain at the -2 position of the sequon. This Arg is conserved in bacterial enzymes and correlates with an extended sequon requirement (Asp-X-Asn-X-Ser/Thr) for bacterial N-glycosylation.</text>
</comment>
<comment type="similarity">
    <text evidence="9">Belongs to the STT3 family.</text>
</comment>
<sequence length="705" mass="80530">MTKFGFLRLSYEKQDTLLKLLILSMAAVLSFSTRLFAVLRFESVIHEFDPYFNYRTTRFLAEEGFYKFHNWFDDRAWYPLGRIIGGTIYPGLMITSAAIYHVLHFFHITIDIRNVCVFLAPLFSSFTTIVTYHLTKELKDAGAGLLAAAMIAVVPGYISRSVAGSYDNEGIAIFCMLLTYYMWIKAVKTGSICWAAKCALAYFYMVSSWGGYVFLINLIPLHVLVLMLTGRFSHRIYVAYCTVYCLGTILSMQISFVGFQPVLSSEHMAAFGVFGLCQIHAFVDYLRSKLNPQQFEVLFRSVISLVGFVLLTVGALLMLTGKISPWTGRFYSLLDPSYAKNNIPIIASVSEHQPTTWSSYYFDLQLLVFMFPVGLYYCFSNLSDARIFIIMYGVTSMYFSAVMVRLMLVLAPVMCILSGIGVSQVLSTYMKNLDISRPDKKSKKQQDSTYPIKNEVASGMILVMAFFLITYTFHSTWVTSEAYSSPSIVLSARGGDGSRIIFDDFREAYYWLRHNTPEDAKVMSWWDYGYQITAMANRTILVDNNTWNNTHISRVGQAMASTEEKAYEIMRELDVSYVLVIFGGLTGYSSDDINKFLWMVRIGGSTDTGKHIKENDYYTPTGEFRVDREGSPVLLNCLMYKMCYYRFGQVYTEAKRPPGFDRVRNAEIGNKDFELDVLEEAYTTEHWLVRIYKVKDLDNRGLSRT</sequence>